<sequence length="555" mass="59420">MGDAAVPAMVVEEEEQEHVFRSRFPPVAVPDGVTVPEFVLDGAEAYADRVALVEAAAGGRSYTYGEVARDTARFARALRSVGVRKGHVVVVALPNLAVYPVVSLGIMSAGAVFSGVNPRALAAEIKKQVEDSEAKLVVANEVAFDKVKDAGVPVIGVGDRERMPGAISWDGLLAAADRTGAGVVPVDAAQQSDLCALPYSSGTTGVSKGVMLSHRNLVSNLCSSMFAVAPETAGQVVTLGLMPFFHIYGITGICCATLRHKGTVVVMDRFDLRTFLRALVDHRVMFAPLVPPVMLAMVKSPVADEFDLSDLALKSVMTAAAPLAPDLLAAFQRKFPGVQVEEAYGLTEHSCITLTHAAGDGHGHVAKKSSVGFILPNLEVKFVDPDTGRSLPANTPGELCVRSQSVMQGYYKRKEETERTVDGKGWLHTGDVGYIDGDGDVFIVDRIKELIKYKGFQVAPAELEAVLLSHPSVEDAAVFGVPDEEAGEVPVACVVRRHGAEEGEEEIVAYVAERVASYKRVRVLHIVDAIPKSVSGKILRRQLRDEFIKRMKPSA</sequence>
<keyword id="KW-0067">ATP-binding</keyword>
<keyword id="KW-0436">Ligase</keyword>
<keyword id="KW-0460">Magnesium</keyword>
<keyword id="KW-0547">Nucleotide-binding</keyword>
<keyword id="KW-1185">Reference proteome</keyword>
<name>4CLL9_ORYSJ</name>
<accession>Q7XXL2</accession>
<accession>Q0JE87</accession>
<protein>
    <recommendedName>
        <fullName>4-coumarate--CoA ligase-like 9</fullName>
        <ecNumber evidence="2">6.2.1.12</ecNumber>
    </recommendedName>
</protein>
<gene>
    <name type="primary">4CLL9</name>
    <name type="synonym">ACOS12</name>
    <name evidence="5" type="ordered locus">Os04g0310700</name>
    <name evidence="4" type="ordered locus">LOC_Os04g24530</name>
    <name evidence="7" type="ORF">OsJ_013660</name>
    <name evidence="6" type="ORF">OSJNBa0033H08.6</name>
</gene>
<reference key="1">
    <citation type="journal article" date="2002" name="Nature">
        <title>Sequence and analysis of rice chromosome 4.</title>
        <authorList>
            <person name="Feng Q."/>
            <person name="Zhang Y."/>
            <person name="Hao P."/>
            <person name="Wang S."/>
            <person name="Fu G."/>
            <person name="Huang Y."/>
            <person name="Li Y."/>
            <person name="Zhu J."/>
            <person name="Liu Y."/>
            <person name="Hu X."/>
            <person name="Jia P."/>
            <person name="Zhang Y."/>
            <person name="Zhao Q."/>
            <person name="Ying K."/>
            <person name="Yu S."/>
            <person name="Tang Y."/>
            <person name="Weng Q."/>
            <person name="Zhang L."/>
            <person name="Lu Y."/>
            <person name="Mu J."/>
            <person name="Lu Y."/>
            <person name="Zhang L.S."/>
            <person name="Yu Z."/>
            <person name="Fan D."/>
            <person name="Liu X."/>
            <person name="Lu T."/>
            <person name="Li C."/>
            <person name="Wu Y."/>
            <person name="Sun T."/>
            <person name="Lei H."/>
            <person name="Li T."/>
            <person name="Hu H."/>
            <person name="Guan J."/>
            <person name="Wu M."/>
            <person name="Zhang R."/>
            <person name="Zhou B."/>
            <person name="Chen Z."/>
            <person name="Chen L."/>
            <person name="Jin Z."/>
            <person name="Wang R."/>
            <person name="Yin H."/>
            <person name="Cai Z."/>
            <person name="Ren S."/>
            <person name="Lv G."/>
            <person name="Gu W."/>
            <person name="Zhu G."/>
            <person name="Tu Y."/>
            <person name="Jia J."/>
            <person name="Zhang Y."/>
            <person name="Chen J."/>
            <person name="Kang H."/>
            <person name="Chen X."/>
            <person name="Shao C."/>
            <person name="Sun Y."/>
            <person name="Hu Q."/>
            <person name="Zhang X."/>
            <person name="Zhang W."/>
            <person name="Wang L."/>
            <person name="Ding C."/>
            <person name="Sheng H."/>
            <person name="Gu J."/>
            <person name="Chen S."/>
            <person name="Ni L."/>
            <person name="Zhu F."/>
            <person name="Chen W."/>
            <person name="Lan L."/>
            <person name="Lai Y."/>
            <person name="Cheng Z."/>
            <person name="Gu M."/>
            <person name="Jiang J."/>
            <person name="Li J."/>
            <person name="Hong G."/>
            <person name="Xue Y."/>
            <person name="Han B."/>
        </authorList>
    </citation>
    <scope>NUCLEOTIDE SEQUENCE [LARGE SCALE GENOMIC DNA]</scope>
    <source>
        <strain>cv. Nipponbare</strain>
    </source>
</reference>
<reference key="2">
    <citation type="journal article" date="2005" name="Nature">
        <title>The map-based sequence of the rice genome.</title>
        <authorList>
            <consortium name="International rice genome sequencing project (IRGSP)"/>
        </authorList>
    </citation>
    <scope>NUCLEOTIDE SEQUENCE [LARGE SCALE GENOMIC DNA]</scope>
    <source>
        <strain>cv. Nipponbare</strain>
    </source>
</reference>
<reference key="3">
    <citation type="journal article" date="2008" name="Nucleic Acids Res.">
        <title>The rice annotation project database (RAP-DB): 2008 update.</title>
        <authorList>
            <consortium name="The rice annotation project (RAP)"/>
        </authorList>
    </citation>
    <scope>GENOME REANNOTATION</scope>
    <source>
        <strain>cv. Nipponbare</strain>
    </source>
</reference>
<reference key="4">
    <citation type="journal article" date="2013" name="Rice">
        <title>Improvement of the Oryza sativa Nipponbare reference genome using next generation sequence and optical map data.</title>
        <authorList>
            <person name="Kawahara Y."/>
            <person name="de la Bastide M."/>
            <person name="Hamilton J.P."/>
            <person name="Kanamori H."/>
            <person name="McCombie W.R."/>
            <person name="Ouyang S."/>
            <person name="Schwartz D.C."/>
            <person name="Tanaka T."/>
            <person name="Wu J."/>
            <person name="Zhou S."/>
            <person name="Childs K.L."/>
            <person name="Davidson R.M."/>
            <person name="Lin H."/>
            <person name="Quesada-Ocampo L."/>
            <person name="Vaillancourt B."/>
            <person name="Sakai H."/>
            <person name="Lee S.S."/>
            <person name="Kim J."/>
            <person name="Numa H."/>
            <person name="Itoh T."/>
            <person name="Buell C.R."/>
            <person name="Matsumoto T."/>
        </authorList>
    </citation>
    <scope>GENOME REANNOTATION</scope>
    <source>
        <strain>cv. Nipponbare</strain>
    </source>
</reference>
<reference key="5">
    <citation type="journal article" date="2005" name="PLoS Biol.">
        <title>The genomes of Oryza sativa: a history of duplications.</title>
        <authorList>
            <person name="Yu J."/>
            <person name="Wang J."/>
            <person name="Lin W."/>
            <person name="Li S."/>
            <person name="Li H."/>
            <person name="Zhou J."/>
            <person name="Ni P."/>
            <person name="Dong W."/>
            <person name="Hu S."/>
            <person name="Zeng C."/>
            <person name="Zhang J."/>
            <person name="Zhang Y."/>
            <person name="Li R."/>
            <person name="Xu Z."/>
            <person name="Li S."/>
            <person name="Li X."/>
            <person name="Zheng H."/>
            <person name="Cong L."/>
            <person name="Lin L."/>
            <person name="Yin J."/>
            <person name="Geng J."/>
            <person name="Li G."/>
            <person name="Shi J."/>
            <person name="Liu J."/>
            <person name="Lv H."/>
            <person name="Li J."/>
            <person name="Wang J."/>
            <person name="Deng Y."/>
            <person name="Ran L."/>
            <person name="Shi X."/>
            <person name="Wang X."/>
            <person name="Wu Q."/>
            <person name="Li C."/>
            <person name="Ren X."/>
            <person name="Wang J."/>
            <person name="Wang X."/>
            <person name="Li D."/>
            <person name="Liu D."/>
            <person name="Zhang X."/>
            <person name="Ji Z."/>
            <person name="Zhao W."/>
            <person name="Sun Y."/>
            <person name="Zhang Z."/>
            <person name="Bao J."/>
            <person name="Han Y."/>
            <person name="Dong L."/>
            <person name="Ji J."/>
            <person name="Chen P."/>
            <person name="Wu S."/>
            <person name="Liu J."/>
            <person name="Xiao Y."/>
            <person name="Bu D."/>
            <person name="Tan J."/>
            <person name="Yang L."/>
            <person name="Ye C."/>
            <person name="Zhang J."/>
            <person name="Xu J."/>
            <person name="Zhou Y."/>
            <person name="Yu Y."/>
            <person name="Zhang B."/>
            <person name="Zhuang S."/>
            <person name="Wei H."/>
            <person name="Liu B."/>
            <person name="Lei M."/>
            <person name="Yu H."/>
            <person name="Li Y."/>
            <person name="Xu H."/>
            <person name="Wei S."/>
            <person name="He X."/>
            <person name="Fang L."/>
            <person name="Zhang Z."/>
            <person name="Zhang Y."/>
            <person name="Huang X."/>
            <person name="Su Z."/>
            <person name="Tong W."/>
            <person name="Li J."/>
            <person name="Tong Z."/>
            <person name="Li S."/>
            <person name="Ye J."/>
            <person name="Wang L."/>
            <person name="Fang L."/>
            <person name="Lei T."/>
            <person name="Chen C.-S."/>
            <person name="Chen H.-C."/>
            <person name="Xu Z."/>
            <person name="Li H."/>
            <person name="Huang H."/>
            <person name="Zhang F."/>
            <person name="Xu H."/>
            <person name="Li N."/>
            <person name="Zhao C."/>
            <person name="Li S."/>
            <person name="Dong L."/>
            <person name="Huang Y."/>
            <person name="Li L."/>
            <person name="Xi Y."/>
            <person name="Qi Q."/>
            <person name="Li W."/>
            <person name="Zhang B."/>
            <person name="Hu W."/>
            <person name="Zhang Y."/>
            <person name="Tian X."/>
            <person name="Jiao Y."/>
            <person name="Liang X."/>
            <person name="Jin J."/>
            <person name="Gao L."/>
            <person name="Zheng W."/>
            <person name="Hao B."/>
            <person name="Liu S.-M."/>
            <person name="Wang W."/>
            <person name="Yuan L."/>
            <person name="Cao M."/>
            <person name="McDermott J."/>
            <person name="Samudrala R."/>
            <person name="Wang J."/>
            <person name="Wong G.K.-S."/>
            <person name="Yang H."/>
        </authorList>
    </citation>
    <scope>NUCLEOTIDE SEQUENCE [LARGE SCALE GENOMIC DNA]</scope>
    <source>
        <strain>cv. Nipponbare</strain>
    </source>
</reference>
<reference key="6">
    <citation type="submission" date="2006-10" db="EMBL/GenBank/DDBJ databases">
        <title>Oryza sativa full length cDNA.</title>
        <authorList>
            <consortium name="The rice full-length cDNA consortium"/>
        </authorList>
    </citation>
    <scope>NUCLEOTIDE SEQUENCE [LARGE SCALE MRNA] OF 420-555</scope>
    <source>
        <strain>cv. Nipponbare</strain>
    </source>
</reference>
<reference key="7">
    <citation type="journal article" date="2008" name="New Phytol.">
        <title>Genome-wide analysis of a land plant-specific acyl:coenzyme A synthetase (ACS) gene family in Arabidopsis, poplar, rice and Physcomitrella.</title>
        <authorList>
            <person name="de Azevedo Souza C."/>
            <person name="Barbazuk B."/>
            <person name="Ralph S.G."/>
            <person name="Bohlmann J."/>
            <person name="Hamberger B."/>
            <person name="Douglas C.J."/>
        </authorList>
    </citation>
    <scope>GENE FAMILY</scope>
</reference>
<reference key="8">
    <citation type="journal article" date="2022" name="Plant Physiol.">
        <title>SWOLLEN TAPETUM AND STERILITY 1 is required for tapetum degeneration and pollen wall formation in rice.</title>
        <authorList>
            <person name="Yuan G."/>
            <person name="Zou T."/>
            <person name="He Z."/>
            <person name="Xiao Q."/>
            <person name="Li G."/>
            <person name="Liu S."/>
            <person name="Xiong P."/>
            <person name="Chen H."/>
            <person name="Peng K."/>
            <person name="Zhang X."/>
            <person name="Luo T."/>
            <person name="Zhou D."/>
            <person name="Yang S."/>
            <person name="Zhou F."/>
            <person name="Zhang K."/>
            <person name="Zheng K."/>
            <person name="Han Y."/>
            <person name="Zhu J."/>
            <person name="Liang Y."/>
            <person name="Deng Q."/>
            <person name="Wang S."/>
            <person name="Sun C."/>
            <person name="Yu X."/>
            <person name="Liu H."/>
            <person name="Wang L."/>
            <person name="Li P."/>
            <person name="Li S."/>
        </authorList>
    </citation>
    <scope>INTERACTION WITH STS1</scope>
</reference>
<feature type="chain" id="PRO_0000351635" description="4-coumarate--CoA ligase-like 9">
    <location>
        <begin position="1"/>
        <end position="555"/>
    </location>
</feature>
<feature type="region of interest" description="SBD1">
    <location>
        <begin position="271"/>
        <end position="342"/>
    </location>
</feature>
<feature type="region of interest" description="SBD2">
    <location>
        <begin position="343"/>
        <end position="410"/>
    </location>
</feature>
<feature type="binding site" evidence="1">
    <location>
        <position position="200"/>
    </location>
    <ligand>
        <name>ATP</name>
        <dbReference type="ChEBI" id="CHEBI:30616"/>
    </ligand>
</feature>
<feature type="binding site" evidence="1">
    <location>
        <position position="201"/>
    </location>
    <ligand>
        <name>ATP</name>
        <dbReference type="ChEBI" id="CHEBI:30616"/>
    </ligand>
</feature>
<feature type="binding site" evidence="1">
    <location>
        <position position="202"/>
    </location>
    <ligand>
        <name>ATP</name>
        <dbReference type="ChEBI" id="CHEBI:30616"/>
    </ligand>
</feature>
<feature type="binding site" evidence="1">
    <location>
        <position position="203"/>
    </location>
    <ligand>
        <name>ATP</name>
        <dbReference type="ChEBI" id="CHEBI:30616"/>
    </ligand>
</feature>
<feature type="binding site" evidence="1">
    <location>
        <position position="204"/>
    </location>
    <ligand>
        <name>ATP</name>
        <dbReference type="ChEBI" id="CHEBI:30616"/>
    </ligand>
</feature>
<feature type="binding site" evidence="1">
    <location>
        <position position="208"/>
    </location>
    <ligand>
        <name>ATP</name>
        <dbReference type="ChEBI" id="CHEBI:30616"/>
    </ligand>
</feature>
<feature type="binding site" evidence="1">
    <location>
        <position position="248"/>
    </location>
    <ligand>
        <name>(E)-4-coumaroyl-AMP</name>
        <dbReference type="ChEBI" id="CHEBI:192348"/>
    </ligand>
</feature>
<feature type="binding site" evidence="1">
    <location>
        <position position="269"/>
    </location>
    <ligand>
        <name>CoA</name>
        <dbReference type="ChEBI" id="CHEBI:57287"/>
    </ligand>
</feature>
<feature type="binding site" evidence="1">
    <location>
        <position position="320"/>
    </location>
    <ligand>
        <name>(E)-4-coumaroyl-AMP</name>
        <dbReference type="ChEBI" id="CHEBI:192348"/>
    </ligand>
</feature>
<feature type="binding site" evidence="1">
    <location>
        <position position="342"/>
    </location>
    <ligand>
        <name>ATP</name>
        <dbReference type="ChEBI" id="CHEBI:30616"/>
    </ligand>
</feature>
<feature type="binding site" evidence="1">
    <location>
        <position position="343"/>
    </location>
    <ligand>
        <name>(E)-4-coumaroyl-AMP</name>
        <dbReference type="ChEBI" id="CHEBI:192348"/>
    </ligand>
</feature>
<feature type="binding site" evidence="1">
    <location>
        <position position="343"/>
    </location>
    <ligand>
        <name>ATP</name>
        <dbReference type="ChEBI" id="CHEBI:30616"/>
    </ligand>
</feature>
<feature type="binding site" evidence="1">
    <location>
        <position position="347"/>
    </location>
    <ligand>
        <name>(E)-4-coumaroyl-AMP</name>
        <dbReference type="ChEBI" id="CHEBI:192348"/>
    </ligand>
</feature>
<feature type="binding site" evidence="1">
    <location>
        <position position="347"/>
    </location>
    <ligand>
        <name>ATP</name>
        <dbReference type="ChEBI" id="CHEBI:30616"/>
    </ligand>
</feature>
<feature type="binding site" evidence="1">
    <location>
        <position position="431"/>
    </location>
    <ligand>
        <name>ATP</name>
        <dbReference type="ChEBI" id="CHEBI:30616"/>
    </ligand>
</feature>
<feature type="binding site" evidence="1">
    <location>
        <position position="446"/>
    </location>
    <ligand>
        <name>ATP</name>
        <dbReference type="ChEBI" id="CHEBI:30616"/>
    </ligand>
</feature>
<feature type="binding site" evidence="1">
    <location>
        <position position="448"/>
    </location>
    <ligand>
        <name>(E)-4-coumaroyl-AMP</name>
        <dbReference type="ChEBI" id="CHEBI:192348"/>
    </ligand>
</feature>
<feature type="binding site" evidence="1">
    <location>
        <position position="452"/>
    </location>
    <ligand>
        <name>(E)-4-coumaroyl-AMP</name>
        <dbReference type="ChEBI" id="CHEBI:192348"/>
    </ligand>
</feature>
<feature type="binding site" evidence="1">
    <location>
        <position position="454"/>
    </location>
    <ligand>
        <name>CoA</name>
        <dbReference type="ChEBI" id="CHEBI:57287"/>
    </ligand>
</feature>
<feature type="binding site" evidence="1">
    <location>
        <position position="455"/>
    </location>
    <ligand>
        <name>CoA</name>
        <dbReference type="ChEBI" id="CHEBI:57287"/>
    </ligand>
</feature>
<feature type="binding site" evidence="1">
    <location>
        <position position="537"/>
    </location>
    <ligand>
        <name>ATP</name>
        <dbReference type="ChEBI" id="CHEBI:30616"/>
    </ligand>
</feature>
<feature type="sequence conflict" description="In Ref. 6; AK242522." evidence="4" ref="6">
    <original>T</original>
    <variation>M</variation>
    <location>
        <position position="420"/>
    </location>
</feature>
<organism>
    <name type="scientific">Oryza sativa subsp. japonica</name>
    <name type="common">Rice</name>
    <dbReference type="NCBI Taxonomy" id="39947"/>
    <lineage>
        <taxon>Eukaryota</taxon>
        <taxon>Viridiplantae</taxon>
        <taxon>Streptophyta</taxon>
        <taxon>Embryophyta</taxon>
        <taxon>Tracheophyta</taxon>
        <taxon>Spermatophyta</taxon>
        <taxon>Magnoliopsida</taxon>
        <taxon>Liliopsida</taxon>
        <taxon>Poales</taxon>
        <taxon>Poaceae</taxon>
        <taxon>BOP clade</taxon>
        <taxon>Oryzoideae</taxon>
        <taxon>Oryzeae</taxon>
        <taxon>Oryzinae</taxon>
        <taxon>Oryza</taxon>
        <taxon>Oryza sativa</taxon>
    </lineage>
</organism>
<comment type="function">
    <text evidence="1">Carboxylate--CoA ligase that may use 4-coumarate as substrate. Follows a two-step reaction mechanism, wherein the carboxylate substrate first undergoes adenylation by ATP, followed by a thioesterification in the presence of CoA to yield the final CoA thioester.</text>
</comment>
<comment type="catalytic activity">
    <reaction evidence="1">
        <text>(E)-4-coumarate + ATP + CoA = (E)-4-coumaroyl-CoA + AMP + diphosphate</text>
        <dbReference type="Rhea" id="RHEA:19641"/>
        <dbReference type="ChEBI" id="CHEBI:12876"/>
        <dbReference type="ChEBI" id="CHEBI:30616"/>
        <dbReference type="ChEBI" id="CHEBI:33019"/>
        <dbReference type="ChEBI" id="CHEBI:57287"/>
        <dbReference type="ChEBI" id="CHEBI:85008"/>
        <dbReference type="ChEBI" id="CHEBI:456215"/>
        <dbReference type="EC" id="6.2.1.12"/>
    </reaction>
    <physiologicalReaction direction="left-to-right" evidence="1">
        <dbReference type="Rhea" id="RHEA:19642"/>
    </physiologicalReaction>
</comment>
<comment type="catalytic activity">
    <reaction evidence="1">
        <text>(E)-4-coumarate + ATP + H(+) = (E)-4-coumaroyl-AMP + diphosphate</text>
        <dbReference type="Rhea" id="RHEA:72419"/>
        <dbReference type="ChEBI" id="CHEBI:12876"/>
        <dbReference type="ChEBI" id="CHEBI:15378"/>
        <dbReference type="ChEBI" id="CHEBI:30616"/>
        <dbReference type="ChEBI" id="CHEBI:33019"/>
        <dbReference type="ChEBI" id="CHEBI:192348"/>
    </reaction>
    <physiologicalReaction direction="left-to-right" evidence="1">
        <dbReference type="Rhea" id="RHEA:72420"/>
    </physiologicalReaction>
</comment>
<comment type="catalytic activity">
    <reaction evidence="1">
        <text>(E)-4-coumaroyl-AMP + CoA = (E)-4-coumaroyl-CoA + AMP + H(+)</text>
        <dbReference type="Rhea" id="RHEA:72423"/>
        <dbReference type="ChEBI" id="CHEBI:15378"/>
        <dbReference type="ChEBI" id="CHEBI:57287"/>
        <dbReference type="ChEBI" id="CHEBI:85008"/>
        <dbReference type="ChEBI" id="CHEBI:192348"/>
        <dbReference type="ChEBI" id="CHEBI:456215"/>
    </reaction>
    <physiologicalReaction direction="left-to-right" evidence="1">
        <dbReference type="Rhea" id="RHEA:72424"/>
    </physiologicalReaction>
</comment>
<comment type="cofactor">
    <cofactor evidence="1">
        <name>Mg(2+)</name>
        <dbReference type="ChEBI" id="CHEBI:18420"/>
    </cofactor>
</comment>
<comment type="subunit">
    <text evidence="3">Interacts with STS1.</text>
</comment>
<comment type="domain">
    <text evidence="2">Both substrate-binding domains (SBD1 and SBD2) are involved in the substrate recognition, and are sufficient to confer the substrate specificity.</text>
</comment>
<comment type="similarity">
    <text evidence="4">Belongs to the ATP-dependent AMP-binding enzyme family.</text>
</comment>
<comment type="sequence caution" evidence="4">
    <conflict type="erroneous gene model prediction">
        <sequence resource="EMBL-CDS" id="BAF14350"/>
    </conflict>
</comment>
<dbReference type="EC" id="6.2.1.12" evidence="2"/>
<dbReference type="EMBL" id="AL662942">
    <property type="protein sequence ID" value="CAD37124.3"/>
    <property type="molecule type" value="Genomic_DNA"/>
</dbReference>
<dbReference type="EMBL" id="AP008210">
    <property type="protein sequence ID" value="BAF14350.1"/>
    <property type="status" value="ALT_SEQ"/>
    <property type="molecule type" value="Genomic_DNA"/>
</dbReference>
<dbReference type="EMBL" id="AP014960">
    <property type="status" value="NOT_ANNOTATED_CDS"/>
    <property type="molecule type" value="Genomic_DNA"/>
</dbReference>
<dbReference type="EMBL" id="CM000141">
    <property type="protein sequence ID" value="EAZ30177.1"/>
    <property type="molecule type" value="Genomic_DNA"/>
</dbReference>
<dbReference type="EMBL" id="AK242522">
    <property type="status" value="NOT_ANNOTATED_CDS"/>
    <property type="molecule type" value="mRNA"/>
</dbReference>
<dbReference type="SMR" id="Q7XXL2"/>
<dbReference type="FunCoup" id="Q7XXL2">
    <property type="interactions" value="995"/>
</dbReference>
<dbReference type="STRING" id="39947.Q7XXL2"/>
<dbReference type="PaxDb" id="39947-Q7XXL2"/>
<dbReference type="EnsemblPlants" id="Os04t0310800-01">
    <property type="protein sequence ID" value="Os04t0310800-01"/>
    <property type="gene ID" value="Os04g0310800"/>
</dbReference>
<dbReference type="Gramene" id="Os04t0310800-01">
    <property type="protein sequence ID" value="Os04t0310800-01"/>
    <property type="gene ID" value="Os04g0310800"/>
</dbReference>
<dbReference type="eggNOG" id="KOG1176">
    <property type="taxonomic scope" value="Eukaryota"/>
</dbReference>
<dbReference type="InParanoid" id="Q7XXL2"/>
<dbReference type="PlantReactome" id="R-OSA-1119316">
    <property type="pathway name" value="Phenylpropanoid biosynthesis"/>
</dbReference>
<dbReference type="PlantReactome" id="R-OSA-1119531">
    <property type="pathway name" value="Flavonoid biosynthesis"/>
</dbReference>
<dbReference type="Proteomes" id="UP000000763">
    <property type="component" value="Chromosome 4"/>
</dbReference>
<dbReference type="Proteomes" id="UP000007752">
    <property type="component" value="Chromosome 4"/>
</dbReference>
<dbReference type="Proteomes" id="UP000059680">
    <property type="component" value="Chromosome 4"/>
</dbReference>
<dbReference type="GO" id="GO:0005783">
    <property type="term" value="C:endoplasmic reticulum"/>
    <property type="evidence" value="ECO:0007669"/>
    <property type="project" value="EnsemblPlants"/>
</dbReference>
<dbReference type="GO" id="GO:0016207">
    <property type="term" value="F:4-coumarate-CoA ligase activity"/>
    <property type="evidence" value="ECO:0007669"/>
    <property type="project" value="UniProtKB-ARBA"/>
</dbReference>
<dbReference type="GO" id="GO:0005524">
    <property type="term" value="F:ATP binding"/>
    <property type="evidence" value="ECO:0007669"/>
    <property type="project" value="UniProtKB-KW"/>
</dbReference>
<dbReference type="GO" id="GO:0004467">
    <property type="term" value="F:long-chain fatty acid-CoA ligase activity"/>
    <property type="evidence" value="ECO:0000318"/>
    <property type="project" value="GO_Central"/>
</dbReference>
<dbReference type="GO" id="GO:0031956">
    <property type="term" value="F:medium-chain fatty acid-CoA ligase activity"/>
    <property type="evidence" value="ECO:0007669"/>
    <property type="project" value="EnsemblPlants"/>
</dbReference>
<dbReference type="GO" id="GO:0106290">
    <property type="term" value="F:trans-cinnamate-CoA ligase activity"/>
    <property type="evidence" value="ECO:0007669"/>
    <property type="project" value="UniProtKB-ARBA"/>
</dbReference>
<dbReference type="GO" id="GO:0046949">
    <property type="term" value="P:fatty-acyl-CoA biosynthetic process"/>
    <property type="evidence" value="ECO:0000318"/>
    <property type="project" value="GO_Central"/>
</dbReference>
<dbReference type="GO" id="GO:0009698">
    <property type="term" value="P:phenylpropanoid metabolic process"/>
    <property type="evidence" value="ECO:0007669"/>
    <property type="project" value="UniProtKB-ARBA"/>
</dbReference>
<dbReference type="GO" id="GO:0080110">
    <property type="term" value="P:sporopollenin biosynthetic process"/>
    <property type="evidence" value="ECO:0007669"/>
    <property type="project" value="EnsemblPlants"/>
</dbReference>
<dbReference type="CDD" id="cd05904">
    <property type="entry name" value="4CL"/>
    <property type="match status" value="1"/>
</dbReference>
<dbReference type="FunFam" id="3.30.300.30:FF:000007">
    <property type="entry name" value="4-coumarate--CoA ligase 2"/>
    <property type="match status" value="1"/>
</dbReference>
<dbReference type="FunFam" id="3.40.50.12780:FF:000003">
    <property type="entry name" value="Long-chain-fatty-acid--CoA ligase FadD"/>
    <property type="match status" value="1"/>
</dbReference>
<dbReference type="Gene3D" id="3.30.300.30">
    <property type="match status" value="1"/>
</dbReference>
<dbReference type="Gene3D" id="3.40.50.12780">
    <property type="entry name" value="N-terminal domain of ligase-like"/>
    <property type="match status" value="1"/>
</dbReference>
<dbReference type="InterPro" id="IPR025110">
    <property type="entry name" value="AMP-bd_C"/>
</dbReference>
<dbReference type="InterPro" id="IPR045851">
    <property type="entry name" value="AMP-bd_C_sf"/>
</dbReference>
<dbReference type="InterPro" id="IPR020845">
    <property type="entry name" value="AMP-binding_CS"/>
</dbReference>
<dbReference type="InterPro" id="IPR000873">
    <property type="entry name" value="AMP-dep_synth/lig_dom"/>
</dbReference>
<dbReference type="InterPro" id="IPR042099">
    <property type="entry name" value="ANL_N_sf"/>
</dbReference>
<dbReference type="PANTHER" id="PTHR24096:SF389">
    <property type="entry name" value="4-COUMARATE--COA LIGASE-LIKE 1"/>
    <property type="match status" value="1"/>
</dbReference>
<dbReference type="PANTHER" id="PTHR24096">
    <property type="entry name" value="LONG-CHAIN-FATTY-ACID--COA LIGASE"/>
    <property type="match status" value="1"/>
</dbReference>
<dbReference type="Pfam" id="PF00501">
    <property type="entry name" value="AMP-binding"/>
    <property type="match status" value="1"/>
</dbReference>
<dbReference type="Pfam" id="PF13193">
    <property type="entry name" value="AMP-binding_C"/>
    <property type="match status" value="1"/>
</dbReference>
<dbReference type="SUPFAM" id="SSF56801">
    <property type="entry name" value="Acetyl-CoA synthetase-like"/>
    <property type="match status" value="1"/>
</dbReference>
<dbReference type="PROSITE" id="PS00455">
    <property type="entry name" value="AMP_BINDING"/>
    <property type="match status" value="1"/>
</dbReference>
<proteinExistence type="evidence at protein level"/>
<evidence type="ECO:0000250" key="1">
    <source>
        <dbReference type="UniProtKB" id="O24146"/>
    </source>
</evidence>
<evidence type="ECO:0000250" key="2">
    <source>
        <dbReference type="UniProtKB" id="Q42524"/>
    </source>
</evidence>
<evidence type="ECO:0000269" key="3">
    <source>
    </source>
</evidence>
<evidence type="ECO:0000305" key="4"/>
<evidence type="ECO:0000312" key="5">
    <source>
        <dbReference type="EMBL" id="BAF14350.1"/>
    </source>
</evidence>
<evidence type="ECO:0000312" key="6">
    <source>
        <dbReference type="EMBL" id="CAD37124.3"/>
    </source>
</evidence>
<evidence type="ECO:0000312" key="7">
    <source>
        <dbReference type="EMBL" id="EAZ30177.1"/>
    </source>
</evidence>